<proteinExistence type="predicted"/>
<accession>Q8TGJ0</accession>
<accession>D6W387</accession>
<gene>
    <name type="ordered locus">YOR394C-A</name>
</gene>
<organism>
    <name type="scientific">Saccharomyces cerevisiae (strain ATCC 204508 / S288c)</name>
    <name type="common">Baker's yeast</name>
    <dbReference type="NCBI Taxonomy" id="559292"/>
    <lineage>
        <taxon>Eukaryota</taxon>
        <taxon>Fungi</taxon>
        <taxon>Dikarya</taxon>
        <taxon>Ascomycota</taxon>
        <taxon>Saccharomycotina</taxon>
        <taxon>Saccharomycetes</taxon>
        <taxon>Saccharomycetales</taxon>
        <taxon>Saccharomycetaceae</taxon>
        <taxon>Saccharomyces</taxon>
    </lineage>
</organism>
<feature type="chain" id="PRO_0000240708" description="Uncharacterized protein YOR394C-A">
    <location>
        <begin position="1"/>
        <end position="55"/>
    </location>
</feature>
<reference key="1">
    <citation type="journal article" date="1997" name="Nature">
        <title>The nucleotide sequence of Saccharomyces cerevisiae chromosome XV.</title>
        <authorList>
            <person name="Dujon B."/>
            <person name="Albermann K."/>
            <person name="Aldea M."/>
            <person name="Alexandraki D."/>
            <person name="Ansorge W."/>
            <person name="Arino J."/>
            <person name="Benes V."/>
            <person name="Bohn C."/>
            <person name="Bolotin-Fukuhara M."/>
            <person name="Bordonne R."/>
            <person name="Boyer J."/>
            <person name="Camasses A."/>
            <person name="Casamayor A."/>
            <person name="Casas C."/>
            <person name="Cheret G."/>
            <person name="Cziepluch C."/>
            <person name="Daignan-Fornier B."/>
            <person name="Dang V.-D."/>
            <person name="de Haan M."/>
            <person name="Delius H."/>
            <person name="Durand P."/>
            <person name="Fairhead C."/>
            <person name="Feldmann H."/>
            <person name="Gaillon L."/>
            <person name="Galisson F."/>
            <person name="Gamo F.-J."/>
            <person name="Gancedo C."/>
            <person name="Goffeau A."/>
            <person name="Goulding S.E."/>
            <person name="Grivell L.A."/>
            <person name="Habbig B."/>
            <person name="Hand N.J."/>
            <person name="Hani J."/>
            <person name="Hattenhorst U."/>
            <person name="Hebling U."/>
            <person name="Hernando Y."/>
            <person name="Herrero E."/>
            <person name="Heumann K."/>
            <person name="Hiesel R."/>
            <person name="Hilger F."/>
            <person name="Hofmann B."/>
            <person name="Hollenberg C.P."/>
            <person name="Hughes B."/>
            <person name="Jauniaux J.-C."/>
            <person name="Kalogeropoulos A."/>
            <person name="Katsoulou C."/>
            <person name="Kordes E."/>
            <person name="Lafuente M.J."/>
            <person name="Landt O."/>
            <person name="Louis E.J."/>
            <person name="Maarse A.C."/>
            <person name="Madania A."/>
            <person name="Mannhaupt G."/>
            <person name="Marck C."/>
            <person name="Martin R.P."/>
            <person name="Mewes H.-W."/>
            <person name="Michaux G."/>
            <person name="Paces V."/>
            <person name="Parle-McDermott A.G."/>
            <person name="Pearson B.M."/>
            <person name="Perrin A."/>
            <person name="Pettersson B."/>
            <person name="Poch O."/>
            <person name="Pohl T.M."/>
            <person name="Poirey R."/>
            <person name="Portetelle D."/>
            <person name="Pujol A."/>
            <person name="Purnelle B."/>
            <person name="Ramezani Rad M."/>
            <person name="Rechmann S."/>
            <person name="Schwager C."/>
            <person name="Schweizer M."/>
            <person name="Sor F."/>
            <person name="Sterky F."/>
            <person name="Tarassov I.A."/>
            <person name="Teodoru C."/>
            <person name="Tettelin H."/>
            <person name="Thierry A."/>
            <person name="Tobiasch E."/>
            <person name="Tzermia M."/>
            <person name="Uhlen M."/>
            <person name="Unseld M."/>
            <person name="Valens M."/>
            <person name="Vandenbol M."/>
            <person name="Vetter I."/>
            <person name="Vlcek C."/>
            <person name="Voet M."/>
            <person name="Volckaert G."/>
            <person name="Voss H."/>
            <person name="Wambutt R."/>
            <person name="Wedler H."/>
            <person name="Wiemann S."/>
            <person name="Winsor B."/>
            <person name="Wolfe K.H."/>
            <person name="Zollner A."/>
            <person name="Zumstein E."/>
            <person name="Kleine K."/>
        </authorList>
    </citation>
    <scope>NUCLEOTIDE SEQUENCE [LARGE SCALE GENOMIC DNA]</scope>
    <source>
        <strain>ATCC 204508 / S288c</strain>
    </source>
</reference>
<reference key="2">
    <citation type="journal article" date="2014" name="G3 (Bethesda)">
        <title>The reference genome sequence of Saccharomyces cerevisiae: Then and now.</title>
        <authorList>
            <person name="Engel S.R."/>
            <person name="Dietrich F.S."/>
            <person name="Fisk D.G."/>
            <person name="Binkley G."/>
            <person name="Balakrishnan R."/>
            <person name="Costanzo M.C."/>
            <person name="Dwight S.S."/>
            <person name="Hitz B.C."/>
            <person name="Karra K."/>
            <person name="Nash R.S."/>
            <person name="Weng S."/>
            <person name="Wong E.D."/>
            <person name="Lloyd P."/>
            <person name="Skrzypek M.S."/>
            <person name="Miyasato S.R."/>
            <person name="Simison M."/>
            <person name="Cherry J.M."/>
        </authorList>
    </citation>
    <scope>GENOME REANNOTATION</scope>
    <source>
        <strain>ATCC 204508 / S288c</strain>
    </source>
</reference>
<reference key="3">
    <citation type="journal article" date="2002" name="Nat. Biotechnol.">
        <title>An integrated approach for finding overlooked genes in yeast.</title>
        <authorList>
            <person name="Kumar A."/>
            <person name="Harrison P.M."/>
            <person name="Cheung K.-H."/>
            <person name="Lan N."/>
            <person name="Echols N."/>
            <person name="Bertone P."/>
            <person name="Miller P."/>
            <person name="Gerstein M.B."/>
            <person name="Snyder M."/>
        </authorList>
    </citation>
    <scope>NUCLEOTIDE SEQUENCE [GENOMIC DNA]</scope>
</reference>
<dbReference type="EMBL" id="Z75302">
    <property type="status" value="NOT_ANNOTATED_CDS"/>
    <property type="molecule type" value="Genomic_DNA"/>
</dbReference>
<dbReference type="EMBL" id="AF480018">
    <property type="protein sequence ID" value="AAL79331.1"/>
    <property type="molecule type" value="Genomic_DNA"/>
</dbReference>
<dbReference type="EMBL" id="BK006948">
    <property type="protein sequence ID" value="DAA11153.1"/>
    <property type="molecule type" value="Genomic_DNA"/>
</dbReference>
<dbReference type="RefSeq" id="NP_878178.1">
    <property type="nucleotide sequence ID" value="NM_001184626.1"/>
</dbReference>
<dbReference type="BioGRID" id="37032">
    <property type="interactions" value="20"/>
</dbReference>
<dbReference type="FunCoup" id="Q8TGJ0">
    <property type="interactions" value="5"/>
</dbReference>
<dbReference type="STRING" id="4932.YOR394C-A"/>
<dbReference type="PaxDb" id="4932-YOR394C-A"/>
<dbReference type="EnsemblFungi" id="YOR394C-A_mRNA">
    <property type="protein sequence ID" value="YOR394C-A"/>
    <property type="gene ID" value="YOR394C-A"/>
</dbReference>
<dbReference type="GeneID" id="1466490"/>
<dbReference type="KEGG" id="sce:YOR394C-A"/>
<dbReference type="AGR" id="SGD:S000028718"/>
<dbReference type="SGD" id="S000028718">
    <property type="gene designation" value="YOR394C-A"/>
</dbReference>
<dbReference type="VEuPathDB" id="FungiDB:YOR394C-A"/>
<dbReference type="HOGENOM" id="CLU_3034146_0_0_1"/>
<dbReference type="InParanoid" id="Q8TGJ0"/>
<dbReference type="OrthoDB" id="10510190at2759"/>
<dbReference type="BioCyc" id="YEAST:G3O-33909-MONOMER"/>
<dbReference type="BioGRID-ORCS" id="1466490">
    <property type="hits" value="2 hits in 10 CRISPR screens"/>
</dbReference>
<dbReference type="PRO" id="PR:Q8TGJ0"/>
<dbReference type="Proteomes" id="UP000002311">
    <property type="component" value="Chromosome XV"/>
</dbReference>
<dbReference type="RNAct" id="Q8TGJ0">
    <property type="molecule type" value="protein"/>
</dbReference>
<keyword id="KW-1185">Reference proteome</keyword>
<sequence length="55" mass="6311">MIVNNTHILTLPPHAVSTLTCILIWHRHTDATVYIISSYPTLTFHSMAHLSLHQY</sequence>
<protein>
    <recommendedName>
        <fullName>Uncharacterized protein YOR394C-A</fullName>
    </recommendedName>
</protein>
<name>YO394_YEAST</name>